<gene>
    <name evidence="1" type="primary">serS</name>
    <name type="ordered locus">PA14_30330</name>
</gene>
<proteinExistence type="inferred from homology"/>
<feature type="chain" id="PRO_1000019773" description="Serine--tRNA ligase">
    <location>
        <begin position="1"/>
        <end position="426"/>
    </location>
</feature>
<feature type="binding site" evidence="1">
    <location>
        <begin position="233"/>
        <end position="235"/>
    </location>
    <ligand>
        <name>L-serine</name>
        <dbReference type="ChEBI" id="CHEBI:33384"/>
    </ligand>
</feature>
<feature type="binding site" evidence="1">
    <location>
        <begin position="264"/>
        <end position="266"/>
    </location>
    <ligand>
        <name>ATP</name>
        <dbReference type="ChEBI" id="CHEBI:30616"/>
    </ligand>
</feature>
<feature type="binding site" evidence="1">
    <location>
        <position position="287"/>
    </location>
    <ligand>
        <name>L-serine</name>
        <dbReference type="ChEBI" id="CHEBI:33384"/>
    </ligand>
</feature>
<feature type="binding site" evidence="1">
    <location>
        <begin position="351"/>
        <end position="354"/>
    </location>
    <ligand>
        <name>ATP</name>
        <dbReference type="ChEBI" id="CHEBI:30616"/>
    </ligand>
</feature>
<feature type="binding site" evidence="1">
    <location>
        <position position="387"/>
    </location>
    <ligand>
        <name>L-serine</name>
        <dbReference type="ChEBI" id="CHEBI:33384"/>
    </ligand>
</feature>
<accession>Q02NA4</accession>
<evidence type="ECO:0000255" key="1">
    <source>
        <dbReference type="HAMAP-Rule" id="MF_00176"/>
    </source>
</evidence>
<name>SYS_PSEAB</name>
<protein>
    <recommendedName>
        <fullName evidence="1">Serine--tRNA ligase</fullName>
        <ecNumber evidence="1">6.1.1.11</ecNumber>
    </recommendedName>
    <alternativeName>
        <fullName evidence="1">Seryl-tRNA synthetase</fullName>
        <shortName evidence="1">SerRS</shortName>
    </alternativeName>
    <alternativeName>
        <fullName evidence="1">Seryl-tRNA(Ser/Sec) synthetase</fullName>
    </alternativeName>
</protein>
<comment type="function">
    <text evidence="1">Catalyzes the attachment of serine to tRNA(Ser). Is also able to aminoacylate tRNA(Sec) with serine, to form the misacylated tRNA L-seryl-tRNA(Sec), which will be further converted into selenocysteinyl-tRNA(Sec).</text>
</comment>
<comment type="catalytic activity">
    <reaction evidence="1">
        <text>tRNA(Ser) + L-serine + ATP = L-seryl-tRNA(Ser) + AMP + diphosphate + H(+)</text>
        <dbReference type="Rhea" id="RHEA:12292"/>
        <dbReference type="Rhea" id="RHEA-COMP:9669"/>
        <dbReference type="Rhea" id="RHEA-COMP:9703"/>
        <dbReference type="ChEBI" id="CHEBI:15378"/>
        <dbReference type="ChEBI" id="CHEBI:30616"/>
        <dbReference type="ChEBI" id="CHEBI:33019"/>
        <dbReference type="ChEBI" id="CHEBI:33384"/>
        <dbReference type="ChEBI" id="CHEBI:78442"/>
        <dbReference type="ChEBI" id="CHEBI:78533"/>
        <dbReference type="ChEBI" id="CHEBI:456215"/>
        <dbReference type="EC" id="6.1.1.11"/>
    </reaction>
</comment>
<comment type="catalytic activity">
    <reaction evidence="1">
        <text>tRNA(Sec) + L-serine + ATP = L-seryl-tRNA(Sec) + AMP + diphosphate + H(+)</text>
        <dbReference type="Rhea" id="RHEA:42580"/>
        <dbReference type="Rhea" id="RHEA-COMP:9742"/>
        <dbReference type="Rhea" id="RHEA-COMP:10128"/>
        <dbReference type="ChEBI" id="CHEBI:15378"/>
        <dbReference type="ChEBI" id="CHEBI:30616"/>
        <dbReference type="ChEBI" id="CHEBI:33019"/>
        <dbReference type="ChEBI" id="CHEBI:33384"/>
        <dbReference type="ChEBI" id="CHEBI:78442"/>
        <dbReference type="ChEBI" id="CHEBI:78533"/>
        <dbReference type="ChEBI" id="CHEBI:456215"/>
        <dbReference type="EC" id="6.1.1.11"/>
    </reaction>
</comment>
<comment type="pathway">
    <text evidence="1">Aminoacyl-tRNA biosynthesis; selenocysteinyl-tRNA(Sec) biosynthesis; L-seryl-tRNA(Sec) from L-serine and tRNA(Sec): step 1/1.</text>
</comment>
<comment type="subunit">
    <text evidence="1">Homodimer. The tRNA molecule binds across the dimer.</text>
</comment>
<comment type="subcellular location">
    <subcellularLocation>
        <location evidence="1">Cytoplasm</location>
    </subcellularLocation>
</comment>
<comment type="domain">
    <text evidence="1">Consists of two distinct domains, a catalytic core and a N-terminal extension that is involved in tRNA binding.</text>
</comment>
<comment type="similarity">
    <text evidence="1">Belongs to the class-II aminoacyl-tRNA synthetase family. Type-1 seryl-tRNA synthetase subfamily.</text>
</comment>
<sequence>MLDPKLVRTQPQEVAARLATRGFQLDVARIEALEEQRKSVQTRTEQLQAERNARSKAIGQAKQRGEDIAPLLADVDRMGSELEEGKRQLDAIQGELDAMLLGIPNLPHESVPVGADEDANVEVRRWGTPKTFDFEVKDHVALGERHGWLDFETAAKLSGARFALMRGPIARLHRALAQFMINLHTAEHGYEEAYTPYLVQAPALQGTGQLPKFEEDLFKIGRDGEADLYLIPTAEVSLTNIVSGQILDAKQLPLKFVAHTPCFRSEAGASGRDTRGMIRQHQFDKVEMVQIVDPATSYEALEGLTANAERVLQLLELPYRVLALCTGDMGFGATKTYDLEVWVPSQDKYREISSCSNCGDFQARRMQARYRNPETGKPELVHTLNGSGLAVGRTLVAVLENYQQADGSIRVPEVLKPYMAGIEVIG</sequence>
<reference key="1">
    <citation type="journal article" date="2006" name="Genome Biol.">
        <title>Genomic analysis reveals that Pseudomonas aeruginosa virulence is combinatorial.</title>
        <authorList>
            <person name="Lee D.G."/>
            <person name="Urbach J.M."/>
            <person name="Wu G."/>
            <person name="Liberati N.T."/>
            <person name="Feinbaum R.L."/>
            <person name="Miyata S."/>
            <person name="Diggins L.T."/>
            <person name="He J."/>
            <person name="Saucier M."/>
            <person name="Deziel E."/>
            <person name="Friedman L."/>
            <person name="Li L."/>
            <person name="Grills G."/>
            <person name="Montgomery K."/>
            <person name="Kucherlapati R."/>
            <person name="Rahme L.G."/>
            <person name="Ausubel F.M."/>
        </authorList>
    </citation>
    <scope>NUCLEOTIDE SEQUENCE [LARGE SCALE GENOMIC DNA]</scope>
    <source>
        <strain>UCBPP-PA14</strain>
    </source>
</reference>
<dbReference type="EC" id="6.1.1.11" evidence="1"/>
<dbReference type="EMBL" id="CP000438">
    <property type="protein sequence ID" value="ABJ11835.1"/>
    <property type="molecule type" value="Genomic_DNA"/>
</dbReference>
<dbReference type="RefSeq" id="WP_003097631.1">
    <property type="nucleotide sequence ID" value="NZ_CP034244.1"/>
</dbReference>
<dbReference type="SMR" id="Q02NA4"/>
<dbReference type="KEGG" id="pau:PA14_30330"/>
<dbReference type="PseudoCAP" id="PA14_30330"/>
<dbReference type="HOGENOM" id="CLU_023797_1_1_6"/>
<dbReference type="BioCyc" id="PAER208963:G1G74-2539-MONOMER"/>
<dbReference type="UniPathway" id="UPA00906">
    <property type="reaction ID" value="UER00895"/>
</dbReference>
<dbReference type="Proteomes" id="UP000000653">
    <property type="component" value="Chromosome"/>
</dbReference>
<dbReference type="GO" id="GO:0005737">
    <property type="term" value="C:cytoplasm"/>
    <property type="evidence" value="ECO:0007669"/>
    <property type="project" value="UniProtKB-SubCell"/>
</dbReference>
<dbReference type="GO" id="GO:0005524">
    <property type="term" value="F:ATP binding"/>
    <property type="evidence" value="ECO:0007669"/>
    <property type="project" value="UniProtKB-UniRule"/>
</dbReference>
<dbReference type="GO" id="GO:0004828">
    <property type="term" value="F:serine-tRNA ligase activity"/>
    <property type="evidence" value="ECO:0007669"/>
    <property type="project" value="UniProtKB-UniRule"/>
</dbReference>
<dbReference type="GO" id="GO:0016260">
    <property type="term" value="P:selenocysteine biosynthetic process"/>
    <property type="evidence" value="ECO:0007669"/>
    <property type="project" value="UniProtKB-UniRule"/>
</dbReference>
<dbReference type="GO" id="GO:0006434">
    <property type="term" value="P:seryl-tRNA aminoacylation"/>
    <property type="evidence" value="ECO:0007669"/>
    <property type="project" value="UniProtKB-UniRule"/>
</dbReference>
<dbReference type="CDD" id="cd00770">
    <property type="entry name" value="SerRS_core"/>
    <property type="match status" value="1"/>
</dbReference>
<dbReference type="Gene3D" id="3.30.930.10">
    <property type="entry name" value="Bira Bifunctional Protein, Domain 2"/>
    <property type="match status" value="1"/>
</dbReference>
<dbReference type="Gene3D" id="1.10.287.40">
    <property type="entry name" value="Serine-tRNA synthetase, tRNA binding domain"/>
    <property type="match status" value="1"/>
</dbReference>
<dbReference type="HAMAP" id="MF_00176">
    <property type="entry name" value="Ser_tRNA_synth_type1"/>
    <property type="match status" value="1"/>
</dbReference>
<dbReference type="InterPro" id="IPR002314">
    <property type="entry name" value="aa-tRNA-synt_IIb"/>
</dbReference>
<dbReference type="InterPro" id="IPR006195">
    <property type="entry name" value="aa-tRNA-synth_II"/>
</dbReference>
<dbReference type="InterPro" id="IPR045864">
    <property type="entry name" value="aa-tRNA-synth_II/BPL/LPL"/>
</dbReference>
<dbReference type="InterPro" id="IPR002317">
    <property type="entry name" value="Ser-tRNA-ligase_type_1"/>
</dbReference>
<dbReference type="InterPro" id="IPR015866">
    <property type="entry name" value="Ser-tRNA-synth_1_N"/>
</dbReference>
<dbReference type="InterPro" id="IPR042103">
    <property type="entry name" value="SerRS_1_N_sf"/>
</dbReference>
<dbReference type="InterPro" id="IPR033729">
    <property type="entry name" value="SerRS_core"/>
</dbReference>
<dbReference type="InterPro" id="IPR010978">
    <property type="entry name" value="tRNA-bd_arm"/>
</dbReference>
<dbReference type="NCBIfam" id="TIGR00414">
    <property type="entry name" value="serS"/>
    <property type="match status" value="1"/>
</dbReference>
<dbReference type="PANTHER" id="PTHR43697:SF1">
    <property type="entry name" value="SERINE--TRNA LIGASE"/>
    <property type="match status" value="1"/>
</dbReference>
<dbReference type="PANTHER" id="PTHR43697">
    <property type="entry name" value="SERYL-TRNA SYNTHETASE"/>
    <property type="match status" value="1"/>
</dbReference>
<dbReference type="Pfam" id="PF02403">
    <property type="entry name" value="Seryl_tRNA_N"/>
    <property type="match status" value="1"/>
</dbReference>
<dbReference type="Pfam" id="PF00587">
    <property type="entry name" value="tRNA-synt_2b"/>
    <property type="match status" value="1"/>
</dbReference>
<dbReference type="PIRSF" id="PIRSF001529">
    <property type="entry name" value="Ser-tRNA-synth_IIa"/>
    <property type="match status" value="1"/>
</dbReference>
<dbReference type="PRINTS" id="PR00981">
    <property type="entry name" value="TRNASYNTHSER"/>
</dbReference>
<dbReference type="SUPFAM" id="SSF55681">
    <property type="entry name" value="Class II aaRS and biotin synthetases"/>
    <property type="match status" value="1"/>
</dbReference>
<dbReference type="SUPFAM" id="SSF46589">
    <property type="entry name" value="tRNA-binding arm"/>
    <property type="match status" value="1"/>
</dbReference>
<dbReference type="PROSITE" id="PS50862">
    <property type="entry name" value="AA_TRNA_LIGASE_II"/>
    <property type="match status" value="1"/>
</dbReference>
<organism>
    <name type="scientific">Pseudomonas aeruginosa (strain UCBPP-PA14)</name>
    <dbReference type="NCBI Taxonomy" id="208963"/>
    <lineage>
        <taxon>Bacteria</taxon>
        <taxon>Pseudomonadati</taxon>
        <taxon>Pseudomonadota</taxon>
        <taxon>Gammaproteobacteria</taxon>
        <taxon>Pseudomonadales</taxon>
        <taxon>Pseudomonadaceae</taxon>
        <taxon>Pseudomonas</taxon>
    </lineage>
</organism>
<keyword id="KW-0030">Aminoacyl-tRNA synthetase</keyword>
<keyword id="KW-0067">ATP-binding</keyword>
<keyword id="KW-0963">Cytoplasm</keyword>
<keyword id="KW-0436">Ligase</keyword>
<keyword id="KW-0547">Nucleotide-binding</keyword>
<keyword id="KW-0648">Protein biosynthesis</keyword>